<comment type="function">
    <text evidence="1">Probably acts as an electrical shunt for an outwardly-directed proton pump that is linked to amino acid decarboxylation, as part of the extreme acid resistance (XAR) response.</text>
</comment>
<comment type="subcellular location">
    <subcellularLocation>
        <location evidence="1">Cell inner membrane</location>
        <topology evidence="1">Multi-pass membrane protein</topology>
    </subcellularLocation>
</comment>
<comment type="similarity">
    <text evidence="1">Belongs to the chloride channel (TC 2.A.49) family. ClcB subfamily.</text>
</comment>
<dbReference type="EMBL" id="CU928162">
    <property type="protein sequence ID" value="CAR07955.2"/>
    <property type="molecule type" value="Genomic_DNA"/>
</dbReference>
<dbReference type="SMR" id="B7MV39"/>
<dbReference type="KEGG" id="ecq:ECED1_1761"/>
<dbReference type="HOGENOM" id="CLU_015263_5_2_6"/>
<dbReference type="Proteomes" id="UP000000748">
    <property type="component" value="Chromosome"/>
</dbReference>
<dbReference type="GO" id="GO:0034707">
    <property type="term" value="C:chloride channel complex"/>
    <property type="evidence" value="ECO:0007669"/>
    <property type="project" value="UniProtKB-KW"/>
</dbReference>
<dbReference type="GO" id="GO:0005886">
    <property type="term" value="C:plasma membrane"/>
    <property type="evidence" value="ECO:0007669"/>
    <property type="project" value="UniProtKB-SubCell"/>
</dbReference>
<dbReference type="GO" id="GO:0005247">
    <property type="term" value="F:voltage-gated chloride channel activity"/>
    <property type="evidence" value="ECO:0007669"/>
    <property type="project" value="UniProtKB-UniRule"/>
</dbReference>
<dbReference type="GO" id="GO:0010447">
    <property type="term" value="P:response to acidic pH"/>
    <property type="evidence" value="ECO:0007669"/>
    <property type="project" value="InterPro"/>
</dbReference>
<dbReference type="CDD" id="cd00400">
    <property type="entry name" value="Voltage_gated_ClC"/>
    <property type="match status" value="1"/>
</dbReference>
<dbReference type="FunFam" id="1.10.3080.10:FF:000010">
    <property type="entry name" value="Voltage-gated ClC-type chloride channel ClcB"/>
    <property type="match status" value="1"/>
</dbReference>
<dbReference type="Gene3D" id="1.10.3080.10">
    <property type="entry name" value="Clc chloride channel"/>
    <property type="match status" value="1"/>
</dbReference>
<dbReference type="HAMAP" id="MF_01203">
    <property type="entry name" value="CLC_ClcB"/>
    <property type="match status" value="1"/>
</dbReference>
<dbReference type="InterPro" id="IPR014743">
    <property type="entry name" value="Cl-channel_core"/>
</dbReference>
<dbReference type="InterPro" id="IPR023790">
    <property type="entry name" value="Cl-channel_volt-gated_ClcB"/>
</dbReference>
<dbReference type="InterPro" id="IPR001807">
    <property type="entry name" value="ClC"/>
</dbReference>
<dbReference type="InterPro" id="IPR050368">
    <property type="entry name" value="ClC-type_chloride_channel"/>
</dbReference>
<dbReference type="NCBIfam" id="NF002437">
    <property type="entry name" value="PRK01610.1"/>
    <property type="match status" value="1"/>
</dbReference>
<dbReference type="PANTHER" id="PTHR43427">
    <property type="entry name" value="CHLORIDE CHANNEL PROTEIN CLC-E"/>
    <property type="match status" value="1"/>
</dbReference>
<dbReference type="PANTHER" id="PTHR43427:SF6">
    <property type="entry name" value="CHLORIDE CHANNEL PROTEIN CLC-E"/>
    <property type="match status" value="1"/>
</dbReference>
<dbReference type="Pfam" id="PF00654">
    <property type="entry name" value="Voltage_CLC"/>
    <property type="match status" value="1"/>
</dbReference>
<dbReference type="PRINTS" id="PR00762">
    <property type="entry name" value="CLCHANNEL"/>
</dbReference>
<dbReference type="SUPFAM" id="SSF81340">
    <property type="entry name" value="Clc chloride channel"/>
    <property type="match status" value="1"/>
</dbReference>
<feature type="chain" id="PRO_1000164648" description="Voltage-gated ClC-type chloride channel ClcB">
    <location>
        <begin position="1"/>
        <end position="418"/>
    </location>
</feature>
<feature type="transmembrane region" description="Helical" evidence="1">
    <location>
        <begin position="5"/>
        <end position="25"/>
    </location>
</feature>
<feature type="transmembrane region" description="Helical" evidence="1">
    <location>
        <begin position="54"/>
        <end position="74"/>
    </location>
</feature>
<feature type="transmembrane region" description="Helical" evidence="1">
    <location>
        <begin position="146"/>
        <end position="166"/>
    </location>
</feature>
<feature type="transmembrane region" description="Helical" evidence="1">
    <location>
        <begin position="168"/>
        <end position="188"/>
    </location>
</feature>
<feature type="transmembrane region" description="Helical" evidence="1">
    <location>
        <begin position="222"/>
        <end position="242"/>
    </location>
</feature>
<feature type="transmembrane region" description="Helical" evidence="1">
    <location>
        <begin position="258"/>
        <end position="278"/>
    </location>
</feature>
<feature type="transmembrane region" description="Helical" evidence="1">
    <location>
        <begin position="291"/>
        <end position="311"/>
    </location>
</feature>
<feature type="transmembrane region" description="Helical" evidence="1">
    <location>
        <begin position="316"/>
        <end position="336"/>
    </location>
</feature>
<feature type="transmembrane region" description="Helical" evidence="1">
    <location>
        <begin position="352"/>
        <end position="372"/>
    </location>
</feature>
<feature type="transmembrane region" description="Helical" evidence="1">
    <location>
        <begin position="380"/>
        <end position="400"/>
    </location>
</feature>
<accession>B7MV39</accession>
<sequence length="418" mass="44139">MFRRLLIATIVGILAAFAVAGFRHAMLLLEWLFLNNDSGSLVNAATNLSPWRRLLTPALGGLAAGLLLMGWQKFTQQRPHAPTDYMEALQTDGQFDYAASLVKSLASLLVVTSGSAIGREGAMILLAALAASCFAQRFTPRQEWKLWIACGAAAGMAAAYRAPLAGSLFIAEVLFGTMMLASLGPVIISAVVALLISNLINHSDALLYSVQLSVTVQARDYALIISTGVLAGLCGPLLLTLMNACHRGFVSLKLAPPWQLALGGLIVGLLSLFTPAVWGNGYSTVQSFLTAPPLLMIIAGIFLCKLCAVLASSGSGAPGGVFTPTLFIGLAIGMLYGRSLGLWLPDGEEITLLLGLTGMATLLAATTHAPIMSTLMICEMTGEYQLLPGLLIACVIASVISRTLHRDSIYRQHTAKHS</sequence>
<gene>
    <name evidence="1" type="primary">clcB</name>
    <name type="ordered locus">ECED1_1761</name>
</gene>
<reference key="1">
    <citation type="journal article" date="2009" name="PLoS Genet.">
        <title>Organised genome dynamics in the Escherichia coli species results in highly diverse adaptive paths.</title>
        <authorList>
            <person name="Touchon M."/>
            <person name="Hoede C."/>
            <person name="Tenaillon O."/>
            <person name="Barbe V."/>
            <person name="Baeriswyl S."/>
            <person name="Bidet P."/>
            <person name="Bingen E."/>
            <person name="Bonacorsi S."/>
            <person name="Bouchier C."/>
            <person name="Bouvet O."/>
            <person name="Calteau A."/>
            <person name="Chiapello H."/>
            <person name="Clermont O."/>
            <person name="Cruveiller S."/>
            <person name="Danchin A."/>
            <person name="Diard M."/>
            <person name="Dossat C."/>
            <person name="Karoui M.E."/>
            <person name="Frapy E."/>
            <person name="Garry L."/>
            <person name="Ghigo J.M."/>
            <person name="Gilles A.M."/>
            <person name="Johnson J."/>
            <person name="Le Bouguenec C."/>
            <person name="Lescat M."/>
            <person name="Mangenot S."/>
            <person name="Martinez-Jehanne V."/>
            <person name="Matic I."/>
            <person name="Nassif X."/>
            <person name="Oztas S."/>
            <person name="Petit M.A."/>
            <person name="Pichon C."/>
            <person name="Rouy Z."/>
            <person name="Ruf C.S."/>
            <person name="Schneider D."/>
            <person name="Tourret J."/>
            <person name="Vacherie B."/>
            <person name="Vallenet D."/>
            <person name="Medigue C."/>
            <person name="Rocha E.P.C."/>
            <person name="Denamur E."/>
        </authorList>
    </citation>
    <scope>NUCLEOTIDE SEQUENCE [LARGE SCALE GENOMIC DNA]</scope>
    <source>
        <strain>ED1a</strain>
    </source>
</reference>
<proteinExistence type="inferred from homology"/>
<name>CLCB_ECO81</name>
<keyword id="KW-0997">Cell inner membrane</keyword>
<keyword id="KW-1003">Cell membrane</keyword>
<keyword id="KW-0868">Chloride</keyword>
<keyword id="KW-0869">Chloride channel</keyword>
<keyword id="KW-0407">Ion channel</keyword>
<keyword id="KW-0406">Ion transport</keyword>
<keyword id="KW-0472">Membrane</keyword>
<keyword id="KW-0812">Transmembrane</keyword>
<keyword id="KW-1133">Transmembrane helix</keyword>
<keyword id="KW-0813">Transport</keyword>
<keyword id="KW-0851">Voltage-gated channel</keyword>
<evidence type="ECO:0000255" key="1">
    <source>
        <dbReference type="HAMAP-Rule" id="MF_01203"/>
    </source>
</evidence>
<organism>
    <name type="scientific">Escherichia coli O81 (strain ED1a)</name>
    <dbReference type="NCBI Taxonomy" id="585397"/>
    <lineage>
        <taxon>Bacteria</taxon>
        <taxon>Pseudomonadati</taxon>
        <taxon>Pseudomonadota</taxon>
        <taxon>Gammaproteobacteria</taxon>
        <taxon>Enterobacterales</taxon>
        <taxon>Enterobacteriaceae</taxon>
        <taxon>Escherichia</taxon>
    </lineage>
</organism>
<protein>
    <recommendedName>
        <fullName evidence="1">Voltage-gated ClC-type chloride channel ClcB</fullName>
    </recommendedName>
</protein>